<accession>B3Q0Y6</accession>
<name>NRDI_RHIE6</name>
<organism>
    <name type="scientific">Rhizobium etli (strain CIAT 652)</name>
    <dbReference type="NCBI Taxonomy" id="491916"/>
    <lineage>
        <taxon>Bacteria</taxon>
        <taxon>Pseudomonadati</taxon>
        <taxon>Pseudomonadota</taxon>
        <taxon>Alphaproteobacteria</taxon>
        <taxon>Hyphomicrobiales</taxon>
        <taxon>Rhizobiaceae</taxon>
        <taxon>Rhizobium/Agrobacterium group</taxon>
        <taxon>Rhizobium</taxon>
    </lineage>
</organism>
<reference key="1">
    <citation type="journal article" date="2010" name="Appl. Environ. Microbiol.">
        <title>Conserved symbiotic plasmid DNA sequences in the multireplicon pangenomic structure of Rhizobium etli.</title>
        <authorList>
            <person name="Gonzalez V."/>
            <person name="Acosta J.L."/>
            <person name="Santamaria R.I."/>
            <person name="Bustos P."/>
            <person name="Fernandez J.L."/>
            <person name="Hernandez Gonzalez I.L."/>
            <person name="Diaz R."/>
            <person name="Flores M."/>
            <person name="Palacios R."/>
            <person name="Mora J."/>
            <person name="Davila G."/>
        </authorList>
    </citation>
    <scope>NUCLEOTIDE SEQUENCE [LARGE SCALE GENOMIC DNA]</scope>
    <source>
        <strain>CIAT 652</strain>
    </source>
</reference>
<protein>
    <recommendedName>
        <fullName evidence="1">Protein NrdI</fullName>
    </recommendedName>
</protein>
<dbReference type="EMBL" id="CP001074">
    <property type="protein sequence ID" value="ACE92927.1"/>
    <property type="molecule type" value="Genomic_DNA"/>
</dbReference>
<dbReference type="SMR" id="B3Q0Y6"/>
<dbReference type="KEGG" id="rec:RHECIAT_CH0003990"/>
<dbReference type="eggNOG" id="COG1780">
    <property type="taxonomic scope" value="Bacteria"/>
</dbReference>
<dbReference type="HOGENOM" id="CLU_114845_0_0_5"/>
<dbReference type="Proteomes" id="UP000008817">
    <property type="component" value="Chromosome"/>
</dbReference>
<dbReference type="GO" id="GO:0010181">
    <property type="term" value="F:FMN binding"/>
    <property type="evidence" value="ECO:0007669"/>
    <property type="project" value="InterPro"/>
</dbReference>
<dbReference type="GO" id="GO:0036211">
    <property type="term" value="P:protein modification process"/>
    <property type="evidence" value="ECO:0007669"/>
    <property type="project" value="InterPro"/>
</dbReference>
<dbReference type="Gene3D" id="3.40.50.360">
    <property type="match status" value="1"/>
</dbReference>
<dbReference type="HAMAP" id="MF_00128">
    <property type="entry name" value="NrdI"/>
    <property type="match status" value="1"/>
</dbReference>
<dbReference type="InterPro" id="IPR029039">
    <property type="entry name" value="Flavoprotein-like_sf"/>
</dbReference>
<dbReference type="InterPro" id="IPR020852">
    <property type="entry name" value="RNR_Ib_NrdI_bac"/>
</dbReference>
<dbReference type="InterPro" id="IPR004465">
    <property type="entry name" value="RNR_NrdI"/>
</dbReference>
<dbReference type="NCBIfam" id="TIGR00333">
    <property type="entry name" value="nrdI"/>
    <property type="match status" value="1"/>
</dbReference>
<dbReference type="PANTHER" id="PTHR37297">
    <property type="entry name" value="PROTEIN NRDI"/>
    <property type="match status" value="1"/>
</dbReference>
<dbReference type="PANTHER" id="PTHR37297:SF1">
    <property type="entry name" value="PROTEIN NRDI"/>
    <property type="match status" value="1"/>
</dbReference>
<dbReference type="Pfam" id="PF07972">
    <property type="entry name" value="Flavodoxin_NdrI"/>
    <property type="match status" value="1"/>
</dbReference>
<dbReference type="PIRSF" id="PIRSF005087">
    <property type="entry name" value="NrdI"/>
    <property type="match status" value="1"/>
</dbReference>
<dbReference type="SUPFAM" id="SSF52218">
    <property type="entry name" value="Flavoproteins"/>
    <property type="match status" value="1"/>
</dbReference>
<feature type="chain" id="PRO_1000095625" description="Protein NrdI">
    <location>
        <begin position="1"/>
        <end position="134"/>
    </location>
</feature>
<proteinExistence type="inferred from homology"/>
<evidence type="ECO:0000255" key="1">
    <source>
        <dbReference type="HAMAP-Rule" id="MF_00128"/>
    </source>
</evidence>
<comment type="function">
    <text evidence="1">Probably involved in ribonucleotide reductase function.</text>
</comment>
<comment type="similarity">
    <text evidence="1">Belongs to the NrdI family.</text>
</comment>
<sequence length="134" mass="14975">MGLIVYYSSRSENTHRFVARLGLRAARIPASGADAFHIREPFVLVVPTYSSGDGKGAVPKQVIRCLNDAENRKHIRGVIAAGNSNFGETYGLAGDVISRKCQVPYLYRFELMGTEEDVANVKHGMERFWTREQL</sequence>
<gene>
    <name evidence="1" type="primary">nrdI</name>
    <name type="ordered locus">RHECIAT_CH0003990</name>
</gene>